<proteinExistence type="inferred from homology"/>
<organism>
    <name type="scientific">Fusobacterium nucleatum subsp. nucleatum (strain ATCC 25586 / DSM 15643 / BCRC 10681 / CIP 101130 / JCM 8532 / KCTC 2640 / LMG 13131 / VPI 4355)</name>
    <dbReference type="NCBI Taxonomy" id="190304"/>
    <lineage>
        <taxon>Bacteria</taxon>
        <taxon>Fusobacteriati</taxon>
        <taxon>Fusobacteriota</taxon>
        <taxon>Fusobacteriia</taxon>
        <taxon>Fusobacteriales</taxon>
        <taxon>Fusobacteriaceae</taxon>
        <taxon>Fusobacterium</taxon>
    </lineage>
</organism>
<reference key="1">
    <citation type="journal article" date="2002" name="J. Bacteriol.">
        <title>Genome sequence and analysis of the oral bacterium Fusobacterium nucleatum strain ATCC 25586.</title>
        <authorList>
            <person name="Kapatral V."/>
            <person name="Anderson I."/>
            <person name="Ivanova N."/>
            <person name="Reznik G."/>
            <person name="Los T."/>
            <person name="Lykidis A."/>
            <person name="Bhattacharyya A."/>
            <person name="Bartman A."/>
            <person name="Gardner W."/>
            <person name="Grechkin G."/>
            <person name="Zhu L."/>
            <person name="Vasieva O."/>
            <person name="Chu L."/>
            <person name="Kogan Y."/>
            <person name="Chaga O."/>
            <person name="Goltsman E."/>
            <person name="Bernal A."/>
            <person name="Larsen N."/>
            <person name="D'Souza M."/>
            <person name="Walunas T."/>
            <person name="Pusch G."/>
            <person name="Haselkorn R."/>
            <person name="Fonstein M."/>
            <person name="Kyrpides N.C."/>
            <person name="Overbeek R."/>
        </authorList>
    </citation>
    <scope>NUCLEOTIDE SEQUENCE [LARGE SCALE GENOMIC DNA]</scope>
    <source>
        <strain>ATCC 25586 / DSM 15643 / BCRC 10681 / CIP 101130 / JCM 8532 / KCTC 2640 / LMG 13131 / VPI 4355</strain>
    </source>
</reference>
<feature type="chain" id="PRO_0000089194" description="Uncharacterized protein FN1951">
    <location>
        <begin position="1"/>
        <end position="175"/>
    </location>
</feature>
<feature type="domain" description="Macro" evidence="1">
    <location>
        <begin position="1"/>
        <end position="173"/>
    </location>
</feature>
<evidence type="ECO:0000255" key="1">
    <source>
        <dbReference type="PROSITE-ProRule" id="PRU00490"/>
    </source>
</evidence>
<evidence type="ECO:0000305" key="2"/>
<comment type="similarity">
    <text evidence="2">Belongs to the MacroD-type family.</text>
</comment>
<accession>Q8RHQ2</accession>
<keyword id="KW-1185">Reference proteome</keyword>
<gene>
    <name type="ordered locus">FN1951</name>
</gene>
<sequence>MYKNIIKLISGDITKIPEVEAIVNAANSSLEMGGGVCGAIFKAAGSELAQECKEIGGCNTGEAVITKGYNLPNKYIIHTVGPRYSTGENREAERLASAYYESLKLANEKGIRRIAFPSISTGIYRFPVDEGAKIALTTAIKFLDKNPSSFDLILWVLDEKTYIVYKEKYKKLLEI</sequence>
<protein>
    <recommendedName>
        <fullName>Uncharacterized protein FN1951</fullName>
    </recommendedName>
</protein>
<name>Y1951_FUSNN</name>
<dbReference type="EMBL" id="AE009951">
    <property type="protein sequence ID" value="AAL94047.1"/>
    <property type="molecule type" value="Genomic_DNA"/>
</dbReference>
<dbReference type="RefSeq" id="NP_602748.1">
    <property type="nucleotide sequence ID" value="NC_003454.1"/>
</dbReference>
<dbReference type="RefSeq" id="WP_005901748.1">
    <property type="nucleotide sequence ID" value="NZ_OZ209243.1"/>
</dbReference>
<dbReference type="SMR" id="Q8RHQ2"/>
<dbReference type="STRING" id="190304.FN1951"/>
<dbReference type="PaxDb" id="190304-FN1951"/>
<dbReference type="EnsemblBacteria" id="AAL94047">
    <property type="protein sequence ID" value="AAL94047"/>
    <property type="gene ID" value="FN1951"/>
</dbReference>
<dbReference type="KEGG" id="fnu:FN1951"/>
<dbReference type="PATRIC" id="fig|190304.8.peg.423"/>
<dbReference type="eggNOG" id="COG2110">
    <property type="taxonomic scope" value="Bacteria"/>
</dbReference>
<dbReference type="HOGENOM" id="CLU_046550_5_1_0"/>
<dbReference type="InParanoid" id="Q8RHQ2"/>
<dbReference type="BioCyc" id="FNUC190304:G1FZS-444-MONOMER"/>
<dbReference type="Proteomes" id="UP000002521">
    <property type="component" value="Chromosome"/>
</dbReference>
<dbReference type="CDD" id="cd02908">
    <property type="entry name" value="Macro_OAADPr_deacetylase"/>
    <property type="match status" value="1"/>
</dbReference>
<dbReference type="Gene3D" id="3.40.220.10">
    <property type="entry name" value="Leucine Aminopeptidase, subunit E, domain 1"/>
    <property type="match status" value="1"/>
</dbReference>
<dbReference type="InterPro" id="IPR002589">
    <property type="entry name" value="Macro_dom"/>
</dbReference>
<dbReference type="InterPro" id="IPR043472">
    <property type="entry name" value="Macro_dom-like"/>
</dbReference>
<dbReference type="PANTHER" id="PTHR11106">
    <property type="entry name" value="GANGLIOSIDE INDUCED DIFFERENTIATION ASSOCIATED PROTEIN 2-RELATED"/>
    <property type="match status" value="1"/>
</dbReference>
<dbReference type="PANTHER" id="PTHR11106:SF27">
    <property type="entry name" value="MACRO DOMAIN-CONTAINING PROTEIN"/>
    <property type="match status" value="1"/>
</dbReference>
<dbReference type="Pfam" id="PF01661">
    <property type="entry name" value="Macro"/>
    <property type="match status" value="1"/>
</dbReference>
<dbReference type="SMART" id="SM00506">
    <property type="entry name" value="A1pp"/>
    <property type="match status" value="1"/>
</dbReference>
<dbReference type="SUPFAM" id="SSF52949">
    <property type="entry name" value="Macro domain-like"/>
    <property type="match status" value="1"/>
</dbReference>
<dbReference type="PROSITE" id="PS51154">
    <property type="entry name" value="MACRO"/>
    <property type="match status" value="1"/>
</dbReference>